<feature type="chain" id="PRO_0000358579" description="NAD(P)H-quinone oxidoreductase subunit K, chloroplastic">
    <location>
        <begin position="1"/>
        <end position="225"/>
    </location>
</feature>
<feature type="binding site" evidence="1">
    <location>
        <position position="43"/>
    </location>
    <ligand>
        <name>[4Fe-4S] cluster</name>
        <dbReference type="ChEBI" id="CHEBI:49883"/>
    </ligand>
</feature>
<feature type="binding site" evidence="1">
    <location>
        <position position="44"/>
    </location>
    <ligand>
        <name>[4Fe-4S] cluster</name>
        <dbReference type="ChEBI" id="CHEBI:49883"/>
    </ligand>
</feature>
<feature type="binding site" evidence="1">
    <location>
        <position position="108"/>
    </location>
    <ligand>
        <name>[4Fe-4S] cluster</name>
        <dbReference type="ChEBI" id="CHEBI:49883"/>
    </ligand>
</feature>
<feature type="binding site" evidence="1">
    <location>
        <position position="139"/>
    </location>
    <ligand>
        <name>[4Fe-4S] cluster</name>
        <dbReference type="ChEBI" id="CHEBI:49883"/>
    </ligand>
</feature>
<gene>
    <name evidence="1" type="primary">ndhK</name>
    <name type="ordered locus">Poptr_cp026</name>
</gene>
<accession>A4GYR4</accession>
<dbReference type="EC" id="7.1.1.-" evidence="1"/>
<dbReference type="EMBL" id="EF489041">
    <property type="protein sequence ID" value="ABO36708.1"/>
    <property type="status" value="ALT_INIT"/>
    <property type="molecule type" value="Genomic_DNA"/>
</dbReference>
<dbReference type="RefSeq" id="YP_001109505.2">
    <property type="nucleotide sequence ID" value="NC_009143.1"/>
</dbReference>
<dbReference type="SMR" id="A4GYR4"/>
<dbReference type="FunCoup" id="A4GYR4">
    <property type="interactions" value="48"/>
</dbReference>
<dbReference type="STRING" id="3694.A4GYR4"/>
<dbReference type="EnsemblPlants" id="Potri.013G163100.2.v4.1">
    <property type="protein sequence ID" value="Potri.013G163100.2.v4.1"/>
    <property type="gene ID" value="Potri.013G163100.v4.1"/>
</dbReference>
<dbReference type="GeneID" id="4929671"/>
<dbReference type="Gramene" id="Potri.013G163100.2.v4.1">
    <property type="protein sequence ID" value="Potri.013G163100.2.v4.1"/>
    <property type="gene ID" value="Potri.013G163100.v4.1"/>
</dbReference>
<dbReference type="KEGG" id="pop:4929671"/>
<dbReference type="eggNOG" id="KOG1687">
    <property type="taxonomic scope" value="Eukaryota"/>
</dbReference>
<dbReference type="InParanoid" id="A4GYR4"/>
<dbReference type="OMA" id="TMKMAPQ"/>
<dbReference type="OrthoDB" id="1889813at2759"/>
<dbReference type="Proteomes" id="UP000006729">
    <property type="component" value="Chloroplast"/>
</dbReference>
<dbReference type="GO" id="GO:0009535">
    <property type="term" value="C:chloroplast thylakoid membrane"/>
    <property type="evidence" value="ECO:0007669"/>
    <property type="project" value="UniProtKB-SubCell"/>
</dbReference>
<dbReference type="GO" id="GO:0045271">
    <property type="term" value="C:respiratory chain complex I"/>
    <property type="evidence" value="ECO:0000318"/>
    <property type="project" value="GO_Central"/>
</dbReference>
<dbReference type="GO" id="GO:0051539">
    <property type="term" value="F:4 iron, 4 sulfur cluster binding"/>
    <property type="evidence" value="ECO:0007669"/>
    <property type="project" value="UniProtKB-KW"/>
</dbReference>
<dbReference type="GO" id="GO:0005506">
    <property type="term" value="F:iron ion binding"/>
    <property type="evidence" value="ECO:0007669"/>
    <property type="project" value="UniProtKB-UniRule"/>
</dbReference>
<dbReference type="GO" id="GO:0008137">
    <property type="term" value="F:NADH dehydrogenase (ubiquinone) activity"/>
    <property type="evidence" value="ECO:0000318"/>
    <property type="project" value="GO_Central"/>
</dbReference>
<dbReference type="GO" id="GO:0048038">
    <property type="term" value="F:quinone binding"/>
    <property type="evidence" value="ECO:0007669"/>
    <property type="project" value="UniProtKB-KW"/>
</dbReference>
<dbReference type="GO" id="GO:0009060">
    <property type="term" value="P:aerobic respiration"/>
    <property type="evidence" value="ECO:0000318"/>
    <property type="project" value="GO_Central"/>
</dbReference>
<dbReference type="GO" id="GO:0015990">
    <property type="term" value="P:electron transport coupled proton transport"/>
    <property type="evidence" value="ECO:0000318"/>
    <property type="project" value="GO_Central"/>
</dbReference>
<dbReference type="GO" id="GO:0019684">
    <property type="term" value="P:photosynthesis, light reaction"/>
    <property type="evidence" value="ECO:0007669"/>
    <property type="project" value="UniProtKB-UniRule"/>
</dbReference>
<dbReference type="FunFam" id="3.40.50.12280:FF:000003">
    <property type="entry name" value="NAD(P)H-quinone oxidoreductase subunit K, chloroplastic"/>
    <property type="match status" value="1"/>
</dbReference>
<dbReference type="Gene3D" id="3.40.50.12280">
    <property type="match status" value="1"/>
</dbReference>
<dbReference type="HAMAP" id="MF_01356">
    <property type="entry name" value="NDH1_NuoB"/>
    <property type="match status" value="1"/>
</dbReference>
<dbReference type="InterPro" id="IPR006137">
    <property type="entry name" value="NADH_UbQ_OxRdtase-like_20kDa"/>
</dbReference>
<dbReference type="InterPro" id="IPR006138">
    <property type="entry name" value="NADH_UQ_OxRdtase_20Kd_su"/>
</dbReference>
<dbReference type="NCBIfam" id="TIGR01957">
    <property type="entry name" value="nuoB_fam"/>
    <property type="match status" value="1"/>
</dbReference>
<dbReference type="NCBIfam" id="NF005012">
    <property type="entry name" value="PRK06411.1"/>
    <property type="match status" value="1"/>
</dbReference>
<dbReference type="PANTHER" id="PTHR11995">
    <property type="entry name" value="NADH DEHYDROGENASE"/>
    <property type="match status" value="1"/>
</dbReference>
<dbReference type="PANTHER" id="PTHR11995:SF14">
    <property type="entry name" value="NADH DEHYDROGENASE [UBIQUINONE] IRON-SULFUR PROTEIN 7, MITOCHONDRIAL"/>
    <property type="match status" value="1"/>
</dbReference>
<dbReference type="Pfam" id="PF01058">
    <property type="entry name" value="Oxidored_q6"/>
    <property type="match status" value="1"/>
</dbReference>
<dbReference type="SUPFAM" id="SSF56770">
    <property type="entry name" value="HydA/Nqo6-like"/>
    <property type="match status" value="1"/>
</dbReference>
<dbReference type="PROSITE" id="PS01150">
    <property type="entry name" value="COMPLEX1_20K"/>
    <property type="match status" value="1"/>
</dbReference>
<keyword id="KW-0004">4Fe-4S</keyword>
<keyword id="KW-0150">Chloroplast</keyword>
<keyword id="KW-0408">Iron</keyword>
<keyword id="KW-0411">Iron-sulfur</keyword>
<keyword id="KW-0472">Membrane</keyword>
<keyword id="KW-0479">Metal-binding</keyword>
<keyword id="KW-0520">NAD</keyword>
<keyword id="KW-0521">NADP</keyword>
<keyword id="KW-0934">Plastid</keyword>
<keyword id="KW-0618">Plastoquinone</keyword>
<keyword id="KW-0874">Quinone</keyword>
<keyword id="KW-1185">Reference proteome</keyword>
<keyword id="KW-0793">Thylakoid</keyword>
<keyword id="KW-1278">Translocase</keyword>
<keyword id="KW-0813">Transport</keyword>
<geneLocation type="chloroplast"/>
<evidence type="ECO:0000255" key="1">
    <source>
        <dbReference type="HAMAP-Rule" id="MF_01356"/>
    </source>
</evidence>
<evidence type="ECO:0000305" key="2"/>
<name>NDHK_POPTR</name>
<organism>
    <name type="scientific">Populus trichocarpa</name>
    <name type="common">Western balsam poplar</name>
    <name type="synonym">Populus balsamifera subsp. trichocarpa</name>
    <dbReference type="NCBI Taxonomy" id="3694"/>
    <lineage>
        <taxon>Eukaryota</taxon>
        <taxon>Viridiplantae</taxon>
        <taxon>Streptophyta</taxon>
        <taxon>Embryophyta</taxon>
        <taxon>Tracheophyta</taxon>
        <taxon>Spermatophyta</taxon>
        <taxon>Magnoliopsida</taxon>
        <taxon>eudicotyledons</taxon>
        <taxon>Gunneridae</taxon>
        <taxon>Pentapetalae</taxon>
        <taxon>rosids</taxon>
        <taxon>fabids</taxon>
        <taxon>Malpighiales</taxon>
        <taxon>Salicaceae</taxon>
        <taxon>Saliceae</taxon>
        <taxon>Populus</taxon>
    </lineage>
</organism>
<reference key="1">
    <citation type="journal article" date="2006" name="Science">
        <title>The genome of black cottonwood, Populus trichocarpa (Torr. &amp; Gray).</title>
        <authorList>
            <person name="Tuskan G.A."/>
            <person name="Difazio S."/>
            <person name="Jansson S."/>
            <person name="Bohlmann J."/>
            <person name="Grigoriev I."/>
            <person name="Hellsten U."/>
            <person name="Putnam N."/>
            <person name="Ralph S."/>
            <person name="Rombauts S."/>
            <person name="Salamov A."/>
            <person name="Schein J."/>
            <person name="Sterck L."/>
            <person name="Aerts A."/>
            <person name="Bhalerao R.R."/>
            <person name="Bhalerao R.P."/>
            <person name="Blaudez D."/>
            <person name="Boerjan W."/>
            <person name="Brun A."/>
            <person name="Brunner A."/>
            <person name="Busov V."/>
            <person name="Campbell M."/>
            <person name="Carlson J."/>
            <person name="Chalot M."/>
            <person name="Chapman J."/>
            <person name="Chen G.-L."/>
            <person name="Cooper D."/>
            <person name="Coutinho P.M."/>
            <person name="Couturier J."/>
            <person name="Covert S."/>
            <person name="Cronk Q."/>
            <person name="Cunningham R."/>
            <person name="Davis J."/>
            <person name="Degroeve S."/>
            <person name="Dejardin A."/>
            <person name="dePamphilis C.W."/>
            <person name="Detter J."/>
            <person name="Dirks B."/>
            <person name="Dubchak I."/>
            <person name="Duplessis S."/>
            <person name="Ehlting J."/>
            <person name="Ellis B."/>
            <person name="Gendler K."/>
            <person name="Goodstein D."/>
            <person name="Gribskov M."/>
            <person name="Grimwood J."/>
            <person name="Groover A."/>
            <person name="Gunter L."/>
            <person name="Hamberger B."/>
            <person name="Heinze B."/>
            <person name="Helariutta Y."/>
            <person name="Henrissat B."/>
            <person name="Holligan D."/>
            <person name="Holt R."/>
            <person name="Huang W."/>
            <person name="Islam-Faridi N."/>
            <person name="Jones S."/>
            <person name="Jones-Rhoades M."/>
            <person name="Jorgensen R."/>
            <person name="Joshi C."/>
            <person name="Kangasjaervi J."/>
            <person name="Karlsson J."/>
            <person name="Kelleher C."/>
            <person name="Kirkpatrick R."/>
            <person name="Kirst M."/>
            <person name="Kohler A."/>
            <person name="Kalluri U."/>
            <person name="Larimer F."/>
            <person name="Leebens-Mack J."/>
            <person name="Leple J.-C."/>
            <person name="Locascio P."/>
            <person name="Lou Y."/>
            <person name="Lucas S."/>
            <person name="Martin F."/>
            <person name="Montanini B."/>
            <person name="Napoli C."/>
            <person name="Nelson D.R."/>
            <person name="Nelson C."/>
            <person name="Nieminen K."/>
            <person name="Nilsson O."/>
            <person name="Pereda V."/>
            <person name="Peter G."/>
            <person name="Philippe R."/>
            <person name="Pilate G."/>
            <person name="Poliakov A."/>
            <person name="Razumovskaya J."/>
            <person name="Richardson P."/>
            <person name="Rinaldi C."/>
            <person name="Ritland K."/>
            <person name="Rouze P."/>
            <person name="Ryaboy D."/>
            <person name="Schmutz J."/>
            <person name="Schrader J."/>
            <person name="Segerman B."/>
            <person name="Shin H."/>
            <person name="Siddiqui A."/>
            <person name="Sterky F."/>
            <person name="Terry A."/>
            <person name="Tsai C.-J."/>
            <person name="Uberbacher E."/>
            <person name="Unneberg P."/>
            <person name="Vahala J."/>
            <person name="Wall K."/>
            <person name="Wessler S."/>
            <person name="Yang G."/>
            <person name="Yin T."/>
            <person name="Douglas C."/>
            <person name="Marra M."/>
            <person name="Sandberg G."/>
            <person name="Van de Peer Y."/>
            <person name="Rokhsar D.S."/>
        </authorList>
    </citation>
    <scope>NUCLEOTIDE SEQUENCE [LARGE SCALE GENOMIC DNA]</scope>
    <source>
        <strain>cv. Nisqually</strain>
    </source>
</reference>
<comment type="function">
    <text evidence="1">NDH shuttles electrons from NAD(P)H:plastoquinone, via FMN and iron-sulfur (Fe-S) centers, to quinones in the photosynthetic chain and possibly in a chloroplast respiratory chain. The immediate electron acceptor for the enzyme in this species is believed to be plastoquinone. Couples the redox reaction to proton translocation, and thus conserves the redox energy in a proton gradient.</text>
</comment>
<comment type="catalytic activity">
    <reaction evidence="1">
        <text>a plastoquinone + NADH + (n+1) H(+)(in) = a plastoquinol + NAD(+) + n H(+)(out)</text>
        <dbReference type="Rhea" id="RHEA:42608"/>
        <dbReference type="Rhea" id="RHEA-COMP:9561"/>
        <dbReference type="Rhea" id="RHEA-COMP:9562"/>
        <dbReference type="ChEBI" id="CHEBI:15378"/>
        <dbReference type="ChEBI" id="CHEBI:17757"/>
        <dbReference type="ChEBI" id="CHEBI:57540"/>
        <dbReference type="ChEBI" id="CHEBI:57945"/>
        <dbReference type="ChEBI" id="CHEBI:62192"/>
    </reaction>
</comment>
<comment type="catalytic activity">
    <reaction evidence="1">
        <text>a plastoquinone + NADPH + (n+1) H(+)(in) = a plastoquinol + NADP(+) + n H(+)(out)</text>
        <dbReference type="Rhea" id="RHEA:42612"/>
        <dbReference type="Rhea" id="RHEA-COMP:9561"/>
        <dbReference type="Rhea" id="RHEA-COMP:9562"/>
        <dbReference type="ChEBI" id="CHEBI:15378"/>
        <dbReference type="ChEBI" id="CHEBI:17757"/>
        <dbReference type="ChEBI" id="CHEBI:57783"/>
        <dbReference type="ChEBI" id="CHEBI:58349"/>
        <dbReference type="ChEBI" id="CHEBI:62192"/>
    </reaction>
</comment>
<comment type="cofactor">
    <cofactor evidence="1">
        <name>[4Fe-4S] cluster</name>
        <dbReference type="ChEBI" id="CHEBI:49883"/>
    </cofactor>
    <text evidence="1">Binds 1 [4Fe-4S] cluster.</text>
</comment>
<comment type="subunit">
    <text evidence="1">NDH is composed of at least 16 different subunits, 5 of which are encoded in the nucleus.</text>
</comment>
<comment type="subcellular location">
    <subcellularLocation>
        <location evidence="1">Plastid</location>
        <location evidence="1">Chloroplast thylakoid membrane</location>
        <topology evidence="1">Peripheral membrane protein</topology>
        <orientation evidence="1">Stromal side</orientation>
    </subcellularLocation>
</comment>
<comment type="similarity">
    <text evidence="1">Belongs to the complex I 20 kDa subunit family.</text>
</comment>
<comment type="sequence caution" evidence="2">
    <conflict type="erroneous initiation">
        <sequence resource="EMBL-CDS" id="ABO36708"/>
    </conflict>
</comment>
<sequence length="225" mass="25215">MNSIEFPLLDRTTPISVISTTSNDLSNWSRLSSLWPLLYGTSCCFIEFASLIGSRFDFDRYGLVPRSSPRQADLILTAGTVTMKMAPSLVRLYEQMPEQKYVIAMGACTITGGMFSTDSYSTVRGVDKLIPVDVYLPGCPPKPEAIIDAITKLRKKISREIYEDRIRSQQGNRCFTTNHKFHIGRTTNTGNYDQGLLYQPPSTSKIAPEAFFKYKKSVSSPELVN</sequence>
<protein>
    <recommendedName>
        <fullName evidence="1">NAD(P)H-quinone oxidoreductase subunit K, chloroplastic</fullName>
        <ecNumber evidence="1">7.1.1.-</ecNumber>
    </recommendedName>
    <alternativeName>
        <fullName evidence="1">NAD(P)H dehydrogenase subunit K</fullName>
    </alternativeName>
    <alternativeName>
        <fullName evidence="1">NADH-plastoquinone oxidoreductase subunit K</fullName>
    </alternativeName>
</protein>
<proteinExistence type="inferred from homology"/>